<evidence type="ECO:0000250" key="1"/>
<evidence type="ECO:0000305" key="2"/>
<gene>
    <name type="primary">hap3</name>
    <name type="synonym">php3</name>
    <name type="ORF">SPAC23C11.08</name>
</gene>
<reference key="1">
    <citation type="journal article" date="1993" name="EMBO J.">
        <title>Mutations in yeast HAP2/HAP3 define a hybrid CCAAT box binding domain.</title>
        <authorList>
            <person name="Xing Y."/>
            <person name="Fikes J.D."/>
            <person name="Guarente L."/>
        </authorList>
    </citation>
    <scope>NUCLEOTIDE SEQUENCE [MRNA]</scope>
    <source>
        <strain>401</strain>
    </source>
</reference>
<reference key="2">
    <citation type="journal article" date="2002" name="Nature">
        <title>The genome sequence of Schizosaccharomyces pombe.</title>
        <authorList>
            <person name="Wood V."/>
            <person name="Gwilliam R."/>
            <person name="Rajandream M.A."/>
            <person name="Lyne M.H."/>
            <person name="Lyne R."/>
            <person name="Stewart A."/>
            <person name="Sgouros J.G."/>
            <person name="Peat N."/>
            <person name="Hayles J."/>
            <person name="Baker S.G."/>
            <person name="Basham D."/>
            <person name="Bowman S."/>
            <person name="Brooks K."/>
            <person name="Brown D."/>
            <person name="Brown S."/>
            <person name="Chillingworth T."/>
            <person name="Churcher C.M."/>
            <person name="Collins M."/>
            <person name="Connor R."/>
            <person name="Cronin A."/>
            <person name="Davis P."/>
            <person name="Feltwell T."/>
            <person name="Fraser A."/>
            <person name="Gentles S."/>
            <person name="Goble A."/>
            <person name="Hamlin N."/>
            <person name="Harris D.E."/>
            <person name="Hidalgo J."/>
            <person name="Hodgson G."/>
            <person name="Holroyd S."/>
            <person name="Hornsby T."/>
            <person name="Howarth S."/>
            <person name="Huckle E.J."/>
            <person name="Hunt S."/>
            <person name="Jagels K."/>
            <person name="James K.D."/>
            <person name="Jones L."/>
            <person name="Jones M."/>
            <person name="Leather S."/>
            <person name="McDonald S."/>
            <person name="McLean J."/>
            <person name="Mooney P."/>
            <person name="Moule S."/>
            <person name="Mungall K.L."/>
            <person name="Murphy L.D."/>
            <person name="Niblett D."/>
            <person name="Odell C."/>
            <person name="Oliver K."/>
            <person name="O'Neil S."/>
            <person name="Pearson D."/>
            <person name="Quail M.A."/>
            <person name="Rabbinowitsch E."/>
            <person name="Rutherford K.M."/>
            <person name="Rutter S."/>
            <person name="Saunders D."/>
            <person name="Seeger K."/>
            <person name="Sharp S."/>
            <person name="Skelton J."/>
            <person name="Simmonds M.N."/>
            <person name="Squares R."/>
            <person name="Squares S."/>
            <person name="Stevens K."/>
            <person name="Taylor K."/>
            <person name="Taylor R.G."/>
            <person name="Tivey A."/>
            <person name="Walsh S.V."/>
            <person name="Warren T."/>
            <person name="Whitehead S."/>
            <person name="Woodward J.R."/>
            <person name="Volckaert G."/>
            <person name="Aert R."/>
            <person name="Robben J."/>
            <person name="Grymonprez B."/>
            <person name="Weltjens I."/>
            <person name="Vanstreels E."/>
            <person name="Rieger M."/>
            <person name="Schaefer M."/>
            <person name="Mueller-Auer S."/>
            <person name="Gabel C."/>
            <person name="Fuchs M."/>
            <person name="Duesterhoeft A."/>
            <person name="Fritzc C."/>
            <person name="Holzer E."/>
            <person name="Moestl D."/>
            <person name="Hilbert H."/>
            <person name="Borzym K."/>
            <person name="Langer I."/>
            <person name="Beck A."/>
            <person name="Lehrach H."/>
            <person name="Reinhardt R."/>
            <person name="Pohl T.M."/>
            <person name="Eger P."/>
            <person name="Zimmermann W."/>
            <person name="Wedler H."/>
            <person name="Wambutt R."/>
            <person name="Purnelle B."/>
            <person name="Goffeau A."/>
            <person name="Cadieu E."/>
            <person name="Dreano S."/>
            <person name="Gloux S."/>
            <person name="Lelaure V."/>
            <person name="Mottier S."/>
            <person name="Galibert F."/>
            <person name="Aves S.J."/>
            <person name="Xiang Z."/>
            <person name="Hunt C."/>
            <person name="Moore K."/>
            <person name="Hurst S.M."/>
            <person name="Lucas M."/>
            <person name="Rochet M."/>
            <person name="Gaillardin C."/>
            <person name="Tallada V.A."/>
            <person name="Garzon A."/>
            <person name="Thode G."/>
            <person name="Daga R.R."/>
            <person name="Cruzado L."/>
            <person name="Jimenez J."/>
            <person name="Sanchez M."/>
            <person name="del Rey F."/>
            <person name="Benito J."/>
            <person name="Dominguez A."/>
            <person name="Revuelta J.L."/>
            <person name="Moreno S."/>
            <person name="Armstrong J."/>
            <person name="Forsburg S.L."/>
            <person name="Cerutti L."/>
            <person name="Lowe T."/>
            <person name="McCombie W.R."/>
            <person name="Paulsen I."/>
            <person name="Potashkin J."/>
            <person name="Shpakovski G.V."/>
            <person name="Ussery D."/>
            <person name="Barrell B.G."/>
            <person name="Nurse P."/>
        </authorList>
    </citation>
    <scope>NUCLEOTIDE SEQUENCE [LARGE SCALE GENOMIC DNA]</scope>
    <source>
        <strain>972 / ATCC 24843</strain>
    </source>
</reference>
<name>HAP3_SCHPO</name>
<dbReference type="EMBL" id="X75072">
    <property type="protein sequence ID" value="CAA52966.1"/>
    <property type="molecule type" value="mRNA"/>
</dbReference>
<dbReference type="EMBL" id="CU329670">
    <property type="protein sequence ID" value="CAB11161.1"/>
    <property type="molecule type" value="Genomic_DNA"/>
</dbReference>
<dbReference type="PIR" id="S42744">
    <property type="entry name" value="S42744"/>
</dbReference>
<dbReference type="RefSeq" id="NP_593639.1">
    <property type="nucleotide sequence ID" value="NM_001019070.1"/>
</dbReference>
<dbReference type="SMR" id="P36611"/>
<dbReference type="BioGRID" id="278509">
    <property type="interactions" value="126"/>
</dbReference>
<dbReference type="FunCoup" id="P36611">
    <property type="interactions" value="47"/>
</dbReference>
<dbReference type="STRING" id="284812.P36611"/>
<dbReference type="iPTMnet" id="P36611"/>
<dbReference type="PaxDb" id="4896-SPAC23C11.08.1"/>
<dbReference type="EnsemblFungi" id="SPAC23C11.08.1">
    <property type="protein sequence ID" value="SPAC23C11.08.1:pep"/>
    <property type="gene ID" value="SPAC23C11.08"/>
</dbReference>
<dbReference type="GeneID" id="2542027"/>
<dbReference type="KEGG" id="spo:2542027"/>
<dbReference type="PomBase" id="SPAC23C11.08"/>
<dbReference type="VEuPathDB" id="FungiDB:SPAC23C11.08"/>
<dbReference type="eggNOG" id="KOG0869">
    <property type="taxonomic scope" value="Eukaryota"/>
</dbReference>
<dbReference type="HOGENOM" id="CLU_066247_12_2_1"/>
<dbReference type="InParanoid" id="P36611"/>
<dbReference type="OMA" id="NEDMPVW"/>
<dbReference type="PhylomeDB" id="P36611"/>
<dbReference type="PRO" id="PR:P36611"/>
<dbReference type="Proteomes" id="UP000002485">
    <property type="component" value="Chromosome I"/>
</dbReference>
<dbReference type="GO" id="GO:0016602">
    <property type="term" value="C:CCAAT-binding factor complex"/>
    <property type="evidence" value="ECO:0000318"/>
    <property type="project" value="GO_Central"/>
</dbReference>
<dbReference type="GO" id="GO:0000785">
    <property type="term" value="C:chromatin"/>
    <property type="evidence" value="ECO:0000305"/>
    <property type="project" value="PomBase"/>
</dbReference>
<dbReference type="GO" id="GO:0001228">
    <property type="term" value="F:DNA-binding transcription activator activity, RNA polymerase II-specific"/>
    <property type="evidence" value="ECO:0007669"/>
    <property type="project" value="InterPro"/>
</dbReference>
<dbReference type="GO" id="GO:0000981">
    <property type="term" value="F:DNA-binding transcription factor activity, RNA polymerase II-specific"/>
    <property type="evidence" value="ECO:0000318"/>
    <property type="project" value="GO_Central"/>
</dbReference>
<dbReference type="GO" id="GO:0046982">
    <property type="term" value="F:protein heterodimerization activity"/>
    <property type="evidence" value="ECO:0007669"/>
    <property type="project" value="InterPro"/>
</dbReference>
<dbReference type="GO" id="GO:0043565">
    <property type="term" value="F:sequence-specific DNA binding"/>
    <property type="evidence" value="ECO:0007669"/>
    <property type="project" value="InterPro"/>
</dbReference>
<dbReference type="GO" id="GO:0045944">
    <property type="term" value="P:positive regulation of transcription by RNA polymerase II"/>
    <property type="evidence" value="ECO:0000315"/>
    <property type="project" value="PomBase"/>
</dbReference>
<dbReference type="GO" id="GO:0006357">
    <property type="term" value="P:regulation of transcription by RNA polymerase II"/>
    <property type="evidence" value="ECO:0000318"/>
    <property type="project" value="GO_Central"/>
</dbReference>
<dbReference type="CDD" id="cd22907">
    <property type="entry name" value="HFD_NFYB"/>
    <property type="match status" value="1"/>
</dbReference>
<dbReference type="FunFam" id="1.10.20.10:FF:000186">
    <property type="entry name" value="CCAAT-binding factor complex subunit Php3"/>
    <property type="match status" value="1"/>
</dbReference>
<dbReference type="Gene3D" id="1.10.20.10">
    <property type="entry name" value="Histone, subunit A"/>
    <property type="match status" value="1"/>
</dbReference>
<dbReference type="InterPro" id="IPR003958">
    <property type="entry name" value="CBFA_NFYB_domain"/>
</dbReference>
<dbReference type="InterPro" id="IPR009072">
    <property type="entry name" value="Histone-fold"/>
</dbReference>
<dbReference type="InterPro" id="IPR027113">
    <property type="entry name" value="Transc_fact_NFYB/HAP3"/>
</dbReference>
<dbReference type="InterPro" id="IPR003956">
    <property type="entry name" value="Transcrpt_fac_NFYB/HAP3_CS"/>
</dbReference>
<dbReference type="PANTHER" id="PTHR11064">
    <property type="entry name" value="CCAAT-BINDING TRANSCRIPTION FACTOR-RELATED"/>
    <property type="match status" value="1"/>
</dbReference>
<dbReference type="PANTHER" id="PTHR11064:SF9">
    <property type="entry name" value="NUCLEAR TRANSCRIPTION FACTOR Y SUBUNIT BETA"/>
    <property type="match status" value="1"/>
</dbReference>
<dbReference type="Pfam" id="PF00808">
    <property type="entry name" value="CBFD_NFYB_HMF"/>
    <property type="match status" value="1"/>
</dbReference>
<dbReference type="PRINTS" id="PR00615">
    <property type="entry name" value="CCAATSUBUNTA"/>
</dbReference>
<dbReference type="SUPFAM" id="SSF47113">
    <property type="entry name" value="Histone-fold"/>
    <property type="match status" value="1"/>
</dbReference>
<dbReference type="PROSITE" id="PS00685">
    <property type="entry name" value="NFYB_HAP3"/>
    <property type="match status" value="1"/>
</dbReference>
<accession>P36611</accession>
<protein>
    <recommendedName>
        <fullName>Transcriptional activator hap3</fullName>
    </recommendedName>
</protein>
<organism>
    <name type="scientific">Schizosaccharomyces pombe (strain 972 / ATCC 24843)</name>
    <name type="common">Fission yeast</name>
    <dbReference type="NCBI Taxonomy" id="284812"/>
    <lineage>
        <taxon>Eukaryota</taxon>
        <taxon>Fungi</taxon>
        <taxon>Dikarya</taxon>
        <taxon>Ascomycota</taxon>
        <taxon>Taphrinomycotina</taxon>
        <taxon>Schizosaccharomycetes</taxon>
        <taxon>Schizosaccharomycetales</taxon>
        <taxon>Schizosaccharomycetaceae</taxon>
        <taxon>Schizosaccharomyces</taxon>
    </lineage>
</organism>
<keyword id="KW-0010">Activator</keyword>
<keyword id="KW-0238">DNA-binding</keyword>
<keyword id="KW-0539">Nucleus</keyword>
<keyword id="KW-1185">Reference proteome</keyword>
<keyword id="KW-0804">Transcription</keyword>
<keyword id="KW-0805">Transcription regulation</keyword>
<sequence>MSADGLDYTNLLPIANVARIMKSALPENAKISKEAKDCVQDCVSEFISFVTGEASEQCTQEKRKTITGEDVLLALNTLGFENYAEVLKISLTKYREQQARSASMKETKQSRSEEPQ</sequence>
<comment type="function">
    <text>Belongs to a complex that binds to the sequence CCAAT located upstream of genes involved in mitochondrial electron transport.</text>
</comment>
<comment type="subunit">
    <text evidence="1">Belongs to a heterotrimeric CCAAT-binding complex.</text>
</comment>
<comment type="subcellular location">
    <subcellularLocation>
        <location>Nucleus</location>
    </subcellularLocation>
</comment>
<comment type="similarity">
    <text evidence="2">Belongs to the NFYB/HAP3 subunit family.</text>
</comment>
<feature type="chain" id="PRO_0000204632" description="Transcriptional activator hap3">
    <location>
        <begin position="1"/>
        <end position="116"/>
    </location>
</feature>
<feature type="DNA-binding region" evidence="1">
    <location>
        <begin position="12"/>
        <end position="18"/>
    </location>
</feature>
<feature type="region of interest" description="Subunit association domain (SAD)" evidence="1">
    <location>
        <begin position="39"/>
        <end position="50"/>
    </location>
</feature>
<proteinExistence type="inferred from homology"/>